<proteinExistence type="inferred from homology"/>
<accession>C4ZUG5</accession>
<protein>
    <recommendedName>
        <fullName evidence="1">Large ribosomal subunit protein uL14</fullName>
    </recommendedName>
    <alternativeName>
        <fullName evidence="2">50S ribosomal protein L14</fullName>
    </alternativeName>
</protein>
<comment type="function">
    <text evidence="1">Binds to 23S rRNA. Forms part of two intersubunit bridges in the 70S ribosome.</text>
</comment>
<comment type="subunit">
    <text evidence="1">Part of the 50S ribosomal subunit. Forms a cluster with proteins L3 and L19. In the 70S ribosome, L14 and L19 interact and together make contacts with the 16S rRNA in bridges B5 and B8.</text>
</comment>
<comment type="similarity">
    <text evidence="1">Belongs to the universal ribosomal protein uL14 family.</text>
</comment>
<gene>
    <name evidence="1" type="primary">rplN</name>
    <name type="ordered locus">BWG_3001</name>
</gene>
<feature type="chain" id="PRO_1000214975" description="Large ribosomal subunit protein uL14">
    <location>
        <begin position="1"/>
        <end position="123"/>
    </location>
</feature>
<dbReference type="EMBL" id="CP001396">
    <property type="protein sequence ID" value="ACR61850.1"/>
    <property type="molecule type" value="Genomic_DNA"/>
</dbReference>
<dbReference type="RefSeq" id="WP_000613955.1">
    <property type="nucleotide sequence ID" value="NC_012759.1"/>
</dbReference>
<dbReference type="SMR" id="C4ZUG5"/>
<dbReference type="GeneID" id="93778677"/>
<dbReference type="KEGG" id="ebw:BWG_3001"/>
<dbReference type="HOGENOM" id="CLU_095071_2_1_6"/>
<dbReference type="GO" id="GO:0022625">
    <property type="term" value="C:cytosolic large ribosomal subunit"/>
    <property type="evidence" value="ECO:0007669"/>
    <property type="project" value="TreeGrafter"/>
</dbReference>
<dbReference type="GO" id="GO:0070180">
    <property type="term" value="F:large ribosomal subunit rRNA binding"/>
    <property type="evidence" value="ECO:0007669"/>
    <property type="project" value="TreeGrafter"/>
</dbReference>
<dbReference type="GO" id="GO:0003735">
    <property type="term" value="F:structural constituent of ribosome"/>
    <property type="evidence" value="ECO:0007669"/>
    <property type="project" value="InterPro"/>
</dbReference>
<dbReference type="GO" id="GO:0006412">
    <property type="term" value="P:translation"/>
    <property type="evidence" value="ECO:0007669"/>
    <property type="project" value="UniProtKB-UniRule"/>
</dbReference>
<dbReference type="CDD" id="cd00337">
    <property type="entry name" value="Ribosomal_uL14"/>
    <property type="match status" value="1"/>
</dbReference>
<dbReference type="FunFam" id="2.40.150.20:FF:000001">
    <property type="entry name" value="50S ribosomal protein L14"/>
    <property type="match status" value="1"/>
</dbReference>
<dbReference type="Gene3D" id="2.40.150.20">
    <property type="entry name" value="Ribosomal protein L14"/>
    <property type="match status" value="1"/>
</dbReference>
<dbReference type="HAMAP" id="MF_01367">
    <property type="entry name" value="Ribosomal_uL14"/>
    <property type="match status" value="1"/>
</dbReference>
<dbReference type="InterPro" id="IPR000218">
    <property type="entry name" value="Ribosomal_uL14"/>
</dbReference>
<dbReference type="InterPro" id="IPR005745">
    <property type="entry name" value="Ribosomal_uL14_bac-type"/>
</dbReference>
<dbReference type="InterPro" id="IPR019972">
    <property type="entry name" value="Ribosomal_uL14_CS"/>
</dbReference>
<dbReference type="InterPro" id="IPR036853">
    <property type="entry name" value="Ribosomal_uL14_sf"/>
</dbReference>
<dbReference type="NCBIfam" id="TIGR01067">
    <property type="entry name" value="rplN_bact"/>
    <property type="match status" value="1"/>
</dbReference>
<dbReference type="PANTHER" id="PTHR11761">
    <property type="entry name" value="50S/60S RIBOSOMAL PROTEIN L14/L23"/>
    <property type="match status" value="1"/>
</dbReference>
<dbReference type="PANTHER" id="PTHR11761:SF3">
    <property type="entry name" value="LARGE RIBOSOMAL SUBUNIT PROTEIN UL14M"/>
    <property type="match status" value="1"/>
</dbReference>
<dbReference type="Pfam" id="PF00238">
    <property type="entry name" value="Ribosomal_L14"/>
    <property type="match status" value="1"/>
</dbReference>
<dbReference type="SMART" id="SM01374">
    <property type="entry name" value="Ribosomal_L14"/>
    <property type="match status" value="1"/>
</dbReference>
<dbReference type="SUPFAM" id="SSF50193">
    <property type="entry name" value="Ribosomal protein L14"/>
    <property type="match status" value="1"/>
</dbReference>
<dbReference type="PROSITE" id="PS00049">
    <property type="entry name" value="RIBOSOMAL_L14"/>
    <property type="match status" value="1"/>
</dbReference>
<reference key="1">
    <citation type="journal article" date="2009" name="J. Bacteriol.">
        <title>Genomic sequencing reveals regulatory mutations and recombinational events in the widely used MC4100 lineage of Escherichia coli K-12.</title>
        <authorList>
            <person name="Ferenci T."/>
            <person name="Zhou Z."/>
            <person name="Betteridge T."/>
            <person name="Ren Y."/>
            <person name="Liu Y."/>
            <person name="Feng L."/>
            <person name="Reeves P.R."/>
            <person name="Wang L."/>
        </authorList>
    </citation>
    <scope>NUCLEOTIDE SEQUENCE [LARGE SCALE GENOMIC DNA]</scope>
    <source>
        <strain>K12 / MC4100 / BW2952</strain>
    </source>
</reference>
<organism>
    <name type="scientific">Escherichia coli (strain K12 / MC4100 / BW2952)</name>
    <dbReference type="NCBI Taxonomy" id="595496"/>
    <lineage>
        <taxon>Bacteria</taxon>
        <taxon>Pseudomonadati</taxon>
        <taxon>Pseudomonadota</taxon>
        <taxon>Gammaproteobacteria</taxon>
        <taxon>Enterobacterales</taxon>
        <taxon>Enterobacteriaceae</taxon>
        <taxon>Escherichia</taxon>
    </lineage>
</organism>
<name>RL14_ECOBW</name>
<keyword id="KW-0687">Ribonucleoprotein</keyword>
<keyword id="KW-0689">Ribosomal protein</keyword>
<keyword id="KW-0694">RNA-binding</keyword>
<keyword id="KW-0699">rRNA-binding</keyword>
<sequence>MIQEQTMLNVADNSGARRVMCIKVLGGSHRRYAGVGDIIKITIKEAIPRGKVKKGDVLKAVVVRTKKGVRRPDGSVIRFDGNACVLLNNNSEQPIGTRIFGPVTRELRSEKFMKIISLAPEVL</sequence>
<evidence type="ECO:0000255" key="1">
    <source>
        <dbReference type="HAMAP-Rule" id="MF_01367"/>
    </source>
</evidence>
<evidence type="ECO:0000305" key="2"/>